<feature type="chain" id="PRO_0000063742" description="Keratin, type II cytoskeletal 8">
    <location>
        <begin position="1"/>
        <end position="483"/>
    </location>
</feature>
<feature type="domain" description="IF rod" evidence="4">
    <location>
        <begin position="91"/>
        <end position="402"/>
    </location>
</feature>
<feature type="region of interest" description="Head">
    <location>
        <begin position="1"/>
        <end position="90"/>
    </location>
</feature>
<feature type="region of interest" description="Disordered" evidence="5">
    <location>
        <begin position="1"/>
        <end position="43"/>
    </location>
</feature>
<feature type="region of interest" description="Coil 1A">
    <location>
        <begin position="91"/>
        <end position="126"/>
    </location>
</feature>
<feature type="region of interest" description="Linker 1">
    <location>
        <begin position="127"/>
        <end position="143"/>
    </location>
</feature>
<feature type="region of interest" description="Coil 1B">
    <location>
        <begin position="144"/>
        <end position="235"/>
    </location>
</feature>
<feature type="region of interest" description="Linker 12">
    <location>
        <begin position="236"/>
        <end position="259"/>
    </location>
</feature>
<feature type="region of interest" description="Coil 2">
    <location>
        <begin position="260"/>
        <end position="398"/>
    </location>
</feature>
<feature type="region of interest" description="Necessary for interaction with PNN" evidence="1">
    <location>
        <begin position="261"/>
        <end position="382"/>
    </location>
</feature>
<feature type="region of interest" description="Tail">
    <location>
        <begin position="399"/>
        <end position="483"/>
    </location>
</feature>
<feature type="compositionally biased region" description="Polar residues" evidence="5">
    <location>
        <begin position="1"/>
        <end position="25"/>
    </location>
</feature>
<feature type="compositionally biased region" description="Low complexity" evidence="5">
    <location>
        <begin position="26"/>
        <end position="43"/>
    </location>
</feature>
<feature type="site" description="Stutter">
    <location>
        <position position="342"/>
    </location>
</feature>
<feature type="modified residue" description="Phosphoserine; by PKC/PRKCE" evidence="11">
    <location>
        <position position="9"/>
    </location>
</feature>
<feature type="modified residue" description="Phosphoserine" evidence="9">
    <location>
        <position position="13"/>
    </location>
</feature>
<feature type="modified residue" description="Phosphoserine" evidence="2">
    <location>
        <position position="15"/>
    </location>
</feature>
<feature type="modified residue" description="Phosphoserine" evidence="12">
    <location>
        <position position="21"/>
    </location>
</feature>
<feature type="modified residue" description="Phosphoserine" evidence="2">
    <location>
        <position position="22"/>
    </location>
</feature>
<feature type="modified residue" description="Omega-N-methylarginine" evidence="2">
    <location>
        <position position="23"/>
    </location>
</feature>
<feature type="modified residue" description="Phosphoserine" evidence="12">
    <location>
        <position position="24"/>
    </location>
</feature>
<feature type="modified residue" description="Phosphoserine; by PKC/PRKCE" evidence="11 12">
    <location>
        <position position="24"/>
    </location>
</feature>
<feature type="modified residue" description="Phosphothreonine" evidence="12">
    <location>
        <position position="26"/>
    </location>
</feature>
<feature type="modified residue" description="Phosphoserine" evidence="12">
    <location>
        <position position="27"/>
    </location>
</feature>
<feature type="modified residue" description="Omega-N-methylarginine" evidence="2">
    <location>
        <position position="32"/>
    </location>
</feature>
<feature type="modified residue" description="Phosphoserine" evidence="9">
    <location>
        <position position="34"/>
    </location>
</feature>
<feature type="modified residue" description="Phosphoserine" evidence="9">
    <location>
        <position position="37"/>
    </location>
</feature>
<feature type="modified residue" description="Phosphoserine" evidence="2">
    <location>
        <position position="39"/>
    </location>
</feature>
<feature type="modified residue" description="Omega-N-methylarginine" evidence="2">
    <location>
        <position position="40"/>
    </location>
</feature>
<feature type="modified residue" description="Phosphoserine" evidence="9 12">
    <location>
        <position position="43"/>
    </location>
</feature>
<feature type="modified residue" description="Phosphoserine" evidence="12">
    <location>
        <position position="44"/>
    </location>
</feature>
<feature type="modified residue" description="Phosphoserine" evidence="12">
    <location>
        <position position="47"/>
    </location>
</feature>
<feature type="modified residue" description="Asymmetric dimethylarginine; alternate" evidence="2">
    <location>
        <position position="49"/>
    </location>
</feature>
<feature type="modified residue" description="Omega-N-methylarginine; alternate" evidence="2">
    <location>
        <position position="49"/>
    </location>
</feature>
<feature type="modified residue" description="Phosphoserine" evidence="9 12">
    <location>
        <position position="51"/>
    </location>
</feature>
<feature type="modified residue" description="N6-malonyllysine" evidence="1">
    <location>
        <position position="101"/>
    </location>
</feature>
<feature type="modified residue" description="N6-acetyllysine" evidence="2">
    <location>
        <position position="207"/>
    </location>
</feature>
<feature type="modified residue" description="Phosphoserine" evidence="12">
    <location>
        <position position="253"/>
    </location>
</feature>
<feature type="modified residue" description="Phosphoserine" evidence="12">
    <location>
        <position position="258"/>
    </location>
</feature>
<feature type="modified residue" description="Phosphoserine" evidence="2">
    <location>
        <position position="274"/>
    </location>
</feature>
<feature type="modified residue" description="N6-acetyllysine; alternate" evidence="2">
    <location>
        <position position="295"/>
    </location>
</feature>
<feature type="modified residue" description="N6-acetyllysine; alternate" evidence="2">
    <location>
        <position position="325"/>
    </location>
</feature>
<feature type="modified residue" description="Phosphoserine" evidence="2">
    <location>
        <position position="400"/>
    </location>
</feature>
<feature type="modified residue" description="Phosphoserine" evidence="2">
    <location>
        <position position="404"/>
    </location>
</feature>
<feature type="modified residue" description="Phosphoserine" evidence="2">
    <location>
        <position position="410"/>
    </location>
</feature>
<feature type="modified residue" description="Phosphoserine" evidence="9">
    <location>
        <position position="417"/>
    </location>
</feature>
<feature type="modified residue" description="Phosphoserine" evidence="9">
    <location>
        <position position="424"/>
    </location>
</feature>
<feature type="modified residue" description="Phosphoserine" evidence="9">
    <location>
        <position position="426"/>
    </location>
</feature>
<feature type="modified residue" description="Phosphoserine" evidence="12">
    <location>
        <position position="432"/>
    </location>
</feature>
<feature type="modified residue" description="Phosphoserine" evidence="12">
    <location>
        <position position="475"/>
    </location>
</feature>
<feature type="modified residue" description="Phosphoserine" evidence="2">
    <location>
        <position position="477"/>
    </location>
</feature>
<feature type="modified residue" description="Phosphoserine" evidence="12">
    <location>
        <position position="478"/>
    </location>
</feature>
<feature type="modified residue" description="Phosphoserine" evidence="12">
    <location>
        <position position="482"/>
    </location>
</feature>
<feature type="cross-link" description="Glycyl lysine isopeptide (Lys-Gly) (interchain with G-Cter in SUMO2)" evidence="2">
    <location>
        <position position="11"/>
    </location>
</feature>
<feature type="cross-link" description="Glycyl lysine isopeptide (Lys-Gly) (interchain with G-Cter in SUMO2)" evidence="2">
    <location>
        <position position="122"/>
    </location>
</feature>
<feature type="cross-link" description="Glycyl lysine isopeptide (Lys-Gly) (interchain with G-Cter in SUMO2)" evidence="2">
    <location>
        <position position="130"/>
    </location>
</feature>
<feature type="cross-link" description="Glycyl lysine isopeptide (Lys-Gly) (interchain with G-Cter in SUMO1); alternate" evidence="2">
    <location>
        <position position="197"/>
    </location>
</feature>
<feature type="cross-link" description="Glycyl lysine isopeptide (Lys-Gly) (interchain with G-Cter in SUMO2); alternate" evidence="2">
    <location>
        <position position="197"/>
    </location>
</feature>
<feature type="cross-link" description="Glycyl lysine isopeptide (Lys-Gly) (interchain with G-Cter in SUMO2)" evidence="2">
    <location>
        <position position="285"/>
    </location>
</feature>
<feature type="cross-link" description="Glycyl lysine isopeptide (Lys-Gly) (interchain with G-Cter in SUMO2); alternate" evidence="2">
    <location>
        <position position="295"/>
    </location>
</feature>
<feature type="cross-link" description="Glycyl lysine isopeptide (Lys-Gly) (interchain with G-Cter in SUMO2)" evidence="2">
    <location>
        <position position="304"/>
    </location>
</feature>
<feature type="cross-link" description="Glycyl lysine isopeptide (Lys-Gly) (interchain with G-Cter in SUMO2); alternate" evidence="2">
    <location>
        <position position="325"/>
    </location>
</feature>
<feature type="cross-link" description="Glycyl lysine isopeptide (Lys-Gly) (interchain with G-Cter in SUMO2)" evidence="2">
    <location>
        <position position="393"/>
    </location>
</feature>
<feature type="cross-link" description="Glycyl lysine isopeptide (Lys-Gly) (interchain with G-Cter in SUMO1); alternate" evidence="2">
    <location>
        <position position="472"/>
    </location>
</feature>
<feature type="cross-link" description="Glycyl lysine isopeptide (Lys-Gly) (interchain with G-Cter in SUMO2); alternate" evidence="2">
    <location>
        <position position="472"/>
    </location>
</feature>
<gene>
    <name type="primary">Krt8</name>
    <name type="synonym">Krt2-8</name>
</gene>
<protein>
    <recommendedName>
        <fullName>Keratin, type II cytoskeletal 8</fullName>
    </recommendedName>
    <alternativeName>
        <fullName>Cytokeratin endo A</fullName>
    </alternativeName>
    <alternativeName>
        <fullName>Cytokeratin-8</fullName>
        <shortName>CK-8</shortName>
    </alternativeName>
    <alternativeName>
        <fullName>Keratin-8</fullName>
        <shortName>K8</shortName>
    </alternativeName>
    <alternativeName>
        <fullName>Type-II keratin Kb8</fullName>
    </alternativeName>
</protein>
<keyword id="KW-0007">Acetylation</keyword>
<keyword id="KW-0175">Coiled coil</keyword>
<keyword id="KW-0963">Cytoplasm</keyword>
<keyword id="KW-0903">Direct protein sequencing</keyword>
<keyword id="KW-0325">Glycoprotein</keyword>
<keyword id="KW-0403">Intermediate filament</keyword>
<keyword id="KW-1017">Isopeptide bond</keyword>
<keyword id="KW-0416">Keratin</keyword>
<keyword id="KW-0488">Methylation</keyword>
<keyword id="KW-0539">Nucleus</keyword>
<keyword id="KW-0597">Phosphoprotein</keyword>
<keyword id="KW-1185">Reference proteome</keyword>
<keyword id="KW-0832">Ubl conjugation</keyword>
<evidence type="ECO:0000250" key="1"/>
<evidence type="ECO:0000250" key="2">
    <source>
        <dbReference type="UniProtKB" id="P05787"/>
    </source>
</evidence>
<evidence type="ECO:0000250" key="3">
    <source>
        <dbReference type="UniProtKB" id="P11679"/>
    </source>
</evidence>
<evidence type="ECO:0000255" key="4">
    <source>
        <dbReference type="PROSITE-ProRule" id="PRU01188"/>
    </source>
</evidence>
<evidence type="ECO:0000256" key="5">
    <source>
        <dbReference type="SAM" id="MobiDB-lite"/>
    </source>
</evidence>
<evidence type="ECO:0000269" key="6">
    <source>
    </source>
</evidence>
<evidence type="ECO:0000269" key="7">
    <source>
    </source>
</evidence>
<evidence type="ECO:0000269" key="8">
    <source>
    </source>
</evidence>
<evidence type="ECO:0000269" key="9">
    <source>
    </source>
</evidence>
<evidence type="ECO:0000305" key="10"/>
<evidence type="ECO:0000305" key="11">
    <source>
    </source>
</evidence>
<evidence type="ECO:0007744" key="12">
    <source>
    </source>
</evidence>
<dbReference type="EMBL" id="M63482">
    <property type="protein sequence ID" value="AAA19667.1"/>
    <property type="molecule type" value="mRNA"/>
</dbReference>
<dbReference type="EMBL" id="M63482">
    <property type="protein sequence ID" value="AAA19668.1"/>
    <property type="status" value="ALT_INIT"/>
    <property type="molecule type" value="mRNA"/>
</dbReference>
<dbReference type="EMBL" id="S76054">
    <property type="status" value="NOT_ANNOTATED_CDS"/>
    <property type="molecule type" value="mRNA"/>
</dbReference>
<dbReference type="EMBL" id="AY464139">
    <property type="protein sequence ID" value="AAR36875.1"/>
    <property type="molecule type" value="mRNA"/>
</dbReference>
<dbReference type="EMBL" id="BC091106">
    <property type="protein sequence ID" value="AAH91106.1"/>
    <property type="molecule type" value="mRNA"/>
</dbReference>
<dbReference type="EMBL" id="BC097497">
    <property type="protein sequence ID" value="AAH97497.1"/>
    <property type="molecule type" value="mRNA"/>
</dbReference>
<dbReference type="RefSeq" id="NP_955402.1">
    <property type="nucleotide sequence ID" value="NM_199370.1"/>
</dbReference>
<dbReference type="SMR" id="Q10758"/>
<dbReference type="BioGRID" id="247655">
    <property type="interactions" value="3"/>
</dbReference>
<dbReference type="FunCoup" id="Q10758">
    <property type="interactions" value="1217"/>
</dbReference>
<dbReference type="IntAct" id="Q10758">
    <property type="interactions" value="8"/>
</dbReference>
<dbReference type="MINT" id="Q10758"/>
<dbReference type="STRING" id="10116.ENSRNOP00000029068"/>
<dbReference type="GlyGen" id="Q10758">
    <property type="glycosylation" value="2 sites, 1 O-linked glycan (1 site)"/>
</dbReference>
<dbReference type="iPTMnet" id="Q10758"/>
<dbReference type="PhosphoSitePlus" id="Q10758"/>
<dbReference type="jPOST" id="Q10758"/>
<dbReference type="PaxDb" id="10116-ENSRNOP00000029068"/>
<dbReference type="Ensembl" id="ENSRNOT00000038480.5">
    <property type="protein sequence ID" value="ENSRNOP00000029068.3"/>
    <property type="gene ID" value="ENSRNOG00000009779.6"/>
</dbReference>
<dbReference type="GeneID" id="25626"/>
<dbReference type="KEGG" id="rno:25626"/>
<dbReference type="UCSC" id="RGD:2984">
    <property type="organism name" value="rat"/>
</dbReference>
<dbReference type="AGR" id="RGD:2984"/>
<dbReference type="CTD" id="3856"/>
<dbReference type="RGD" id="2984">
    <property type="gene designation" value="Krt8"/>
</dbReference>
<dbReference type="eggNOG" id="ENOG502QURK">
    <property type="taxonomic scope" value="Eukaryota"/>
</dbReference>
<dbReference type="GeneTree" id="ENSGT00940000153339"/>
<dbReference type="HOGENOM" id="CLU_012560_5_4_1"/>
<dbReference type="InParanoid" id="Q10758"/>
<dbReference type="OMA" id="XRASLEA"/>
<dbReference type="OrthoDB" id="2441647at2759"/>
<dbReference type="PhylomeDB" id="Q10758"/>
<dbReference type="TreeFam" id="TF317854"/>
<dbReference type="Reactome" id="R-RNO-6805567">
    <property type="pathway name" value="Keratinization"/>
</dbReference>
<dbReference type="Reactome" id="R-RNO-6809371">
    <property type="pathway name" value="Formation of the cornified envelope"/>
</dbReference>
<dbReference type="PRO" id="PR:Q10758"/>
<dbReference type="Proteomes" id="UP000002494">
    <property type="component" value="Chromosome 7"/>
</dbReference>
<dbReference type="Bgee" id="ENSRNOG00000009779">
    <property type="expression patterns" value="Expressed in jejunum and 17 other cell types or tissues"/>
</dbReference>
<dbReference type="GO" id="GO:0016327">
    <property type="term" value="C:apicolateral plasma membrane"/>
    <property type="evidence" value="ECO:0000266"/>
    <property type="project" value="RGD"/>
</dbReference>
<dbReference type="GO" id="GO:0071944">
    <property type="term" value="C:cell periphery"/>
    <property type="evidence" value="ECO:0000266"/>
    <property type="project" value="RGD"/>
</dbReference>
<dbReference type="GO" id="GO:0005911">
    <property type="term" value="C:cell-cell junction"/>
    <property type="evidence" value="ECO:0000266"/>
    <property type="project" value="RGD"/>
</dbReference>
<dbReference type="GO" id="GO:0043034">
    <property type="term" value="C:costamere"/>
    <property type="evidence" value="ECO:0000314"/>
    <property type="project" value="RGD"/>
</dbReference>
<dbReference type="GO" id="GO:0005737">
    <property type="term" value="C:cytoplasm"/>
    <property type="evidence" value="ECO:0000266"/>
    <property type="project" value="RGD"/>
</dbReference>
<dbReference type="GO" id="GO:0016010">
    <property type="term" value="C:dystrophin-associated glycoprotein complex"/>
    <property type="evidence" value="ECO:0000314"/>
    <property type="project" value="UniProtKB"/>
</dbReference>
<dbReference type="GO" id="GO:0005882">
    <property type="term" value="C:intermediate filament"/>
    <property type="evidence" value="ECO:0000266"/>
    <property type="project" value="RGD"/>
</dbReference>
<dbReference type="GO" id="GO:0045095">
    <property type="term" value="C:keratin filament"/>
    <property type="evidence" value="ECO:0000314"/>
    <property type="project" value="RGD"/>
</dbReference>
<dbReference type="GO" id="GO:0016363">
    <property type="term" value="C:nuclear matrix"/>
    <property type="evidence" value="ECO:0007669"/>
    <property type="project" value="UniProtKB-SubCell"/>
</dbReference>
<dbReference type="GO" id="GO:0005654">
    <property type="term" value="C:nucleoplasm"/>
    <property type="evidence" value="ECO:0007669"/>
    <property type="project" value="UniProtKB-SubCell"/>
</dbReference>
<dbReference type="GO" id="GO:0042383">
    <property type="term" value="C:sarcolemma"/>
    <property type="evidence" value="ECO:0000314"/>
    <property type="project" value="UniProtKB"/>
</dbReference>
<dbReference type="GO" id="GO:0030018">
    <property type="term" value="C:Z disc"/>
    <property type="evidence" value="ECO:0000314"/>
    <property type="project" value="UniProtKB"/>
</dbReference>
<dbReference type="GO" id="GO:0044877">
    <property type="term" value="F:protein-containing complex binding"/>
    <property type="evidence" value="ECO:0000353"/>
    <property type="project" value="RGD"/>
</dbReference>
<dbReference type="GO" id="GO:0097110">
    <property type="term" value="F:scaffold protein binding"/>
    <property type="evidence" value="ECO:0000266"/>
    <property type="project" value="RGD"/>
</dbReference>
<dbReference type="GO" id="GO:0060706">
    <property type="term" value="P:cell differentiation involved in embryonic placenta development"/>
    <property type="evidence" value="ECO:0000266"/>
    <property type="project" value="RGD"/>
</dbReference>
<dbReference type="GO" id="GO:0097191">
    <property type="term" value="P:extrinsic apoptotic signaling pathway"/>
    <property type="evidence" value="ECO:0000266"/>
    <property type="project" value="RGD"/>
</dbReference>
<dbReference type="GO" id="GO:0097284">
    <property type="term" value="P:hepatocyte apoptotic process"/>
    <property type="evidence" value="ECO:0000266"/>
    <property type="project" value="RGD"/>
</dbReference>
<dbReference type="GO" id="GO:0051599">
    <property type="term" value="P:response to hydrostatic pressure"/>
    <property type="evidence" value="ECO:0000314"/>
    <property type="project" value="RGD"/>
</dbReference>
<dbReference type="GO" id="GO:0051707">
    <property type="term" value="P:response to other organism"/>
    <property type="evidence" value="ECO:0000266"/>
    <property type="project" value="RGD"/>
</dbReference>
<dbReference type="GO" id="GO:0045214">
    <property type="term" value="P:sarcomere organization"/>
    <property type="evidence" value="ECO:0000314"/>
    <property type="project" value="UniProtKB"/>
</dbReference>
<dbReference type="GO" id="GO:0033209">
    <property type="term" value="P:tumor necrosis factor-mediated signaling pathway"/>
    <property type="evidence" value="ECO:0000266"/>
    <property type="project" value="RGD"/>
</dbReference>
<dbReference type="FunFam" id="1.20.5.1160:FF:000001">
    <property type="entry name" value="Keratin type II"/>
    <property type="match status" value="1"/>
</dbReference>
<dbReference type="FunFam" id="1.20.5.170:FF:000004">
    <property type="entry name" value="Keratin, type II cytoskeletal 5"/>
    <property type="match status" value="1"/>
</dbReference>
<dbReference type="FunFam" id="1.20.5.500:FF:000001">
    <property type="entry name" value="Type II keratin 23"/>
    <property type="match status" value="1"/>
</dbReference>
<dbReference type="Gene3D" id="1.20.5.170">
    <property type="match status" value="1"/>
</dbReference>
<dbReference type="Gene3D" id="1.20.5.500">
    <property type="entry name" value="Single helix bin"/>
    <property type="match status" value="1"/>
</dbReference>
<dbReference type="Gene3D" id="1.20.5.1160">
    <property type="entry name" value="Vasodilator-stimulated phosphoprotein"/>
    <property type="match status" value="1"/>
</dbReference>
<dbReference type="InterPro" id="IPR018039">
    <property type="entry name" value="IF_conserved"/>
</dbReference>
<dbReference type="InterPro" id="IPR039008">
    <property type="entry name" value="IF_rod_dom"/>
</dbReference>
<dbReference type="InterPro" id="IPR032444">
    <property type="entry name" value="Keratin_2_head"/>
</dbReference>
<dbReference type="InterPro" id="IPR003054">
    <property type="entry name" value="Keratin_II"/>
</dbReference>
<dbReference type="PANTHER" id="PTHR45616">
    <property type="entry name" value="GATA-TYPE DOMAIN-CONTAINING PROTEIN"/>
    <property type="match status" value="1"/>
</dbReference>
<dbReference type="PANTHER" id="PTHR45616:SF26">
    <property type="entry name" value="KERATIN, TYPE II CYTOSKELETAL 8"/>
    <property type="match status" value="1"/>
</dbReference>
<dbReference type="Pfam" id="PF00038">
    <property type="entry name" value="Filament"/>
    <property type="match status" value="1"/>
</dbReference>
<dbReference type="Pfam" id="PF16208">
    <property type="entry name" value="Keratin_2_head"/>
    <property type="match status" value="1"/>
</dbReference>
<dbReference type="PRINTS" id="PR01276">
    <property type="entry name" value="TYPE2KERATIN"/>
</dbReference>
<dbReference type="SMART" id="SM01391">
    <property type="entry name" value="Filament"/>
    <property type="match status" value="1"/>
</dbReference>
<dbReference type="SUPFAM" id="SSF64593">
    <property type="entry name" value="Intermediate filament protein, coiled coil region"/>
    <property type="match status" value="3"/>
</dbReference>
<dbReference type="PROSITE" id="PS00226">
    <property type="entry name" value="IF_ROD_1"/>
    <property type="match status" value="1"/>
</dbReference>
<dbReference type="PROSITE" id="PS51842">
    <property type="entry name" value="IF_ROD_2"/>
    <property type="match status" value="1"/>
</dbReference>
<reference key="1">
    <citation type="journal article" date="1992" name="J. Biol. Chem.">
        <title>Regulation of basal and luminal cell-specific cytokeratin expression in rat accessory sex organs. Evidence for a new class of androgen-repressed genes and insight into their pairwise control.</title>
        <authorList>
            <person name="Hsieh J.-T."/>
            <person name="Zhau H.E."/>
            <person name="Wang X.-H."/>
            <person name="Liew C.-C."/>
            <person name="Chung L.W.K."/>
        </authorList>
    </citation>
    <scope>NUCLEOTIDE SEQUENCE [MRNA]</scope>
    <scope>TISSUE SPECIFICITY</scope>
    <source>
        <strain>Sprague-Dawley</strain>
        <tissue>Prostate</tissue>
    </source>
</reference>
<reference key="2">
    <citation type="journal article" date="1994" name="Zhongguo Yi Xue Ke Xue Yuan Xue Bao">
        <title>Cloning and characterization of a specific cytokeratin-8 cDNA from rat prostatic epithelium.</title>
        <authorList>
            <person name="Wang X."/>
            <person name="Hsieh J.-T."/>
            <person name="Zhau H.E."/>
        </authorList>
    </citation>
    <scope>NUCLEOTIDE SEQUENCE [MRNA]</scope>
    <source>
        <tissue>Prostate</tissue>
    </source>
</reference>
<reference key="3">
    <citation type="journal article" date="2004" name="J. Biol. Chem.">
        <title>Cloning and characterization of cytokeratins 8 and 19 in adult rat striated muscle. Interaction with the dystrophin glycoprotein complex.</title>
        <authorList>
            <person name="Ursitti J.A."/>
            <person name="Lee P.C."/>
            <person name="Resneck W.G."/>
            <person name="McNally M.M."/>
            <person name="Bowman A.L."/>
            <person name="O'Neill A."/>
            <person name="Stone M.R."/>
            <person name="Bloch R.J."/>
        </authorList>
    </citation>
    <scope>NUCLEOTIDE SEQUENCE [MRNA]</scope>
    <scope>FUNCTION</scope>
    <scope>INTERACTION WITH DMD</scope>
    <scope>TISSUE SPECIFICITY</scope>
    <source>
        <strain>Sprague-Dawley</strain>
        <tissue>Heart muscle</tissue>
    </source>
</reference>
<reference key="4">
    <citation type="journal article" date="2004" name="Genome Res.">
        <title>The status, quality, and expansion of the NIH full-length cDNA project: the Mammalian Gene Collection (MGC).</title>
        <authorList>
            <consortium name="The MGC Project Team"/>
        </authorList>
    </citation>
    <scope>NUCLEOTIDE SEQUENCE [LARGE SCALE MRNA]</scope>
    <source>
        <tissue>Placenta</tissue>
        <tissue>Thymus</tissue>
    </source>
</reference>
<reference key="5">
    <citation type="journal article" date="1996" name="Biochem. Biophys. Res. Commun.">
        <title>Keratin 8 phosphorylation in vitro by cAMP-dependent protein kinase occurs within the amino- and carboxyl-terminal end domains.</title>
        <authorList>
            <person name="Ando S."/>
            <person name="Tokui T."/>
            <person name="Yano T."/>
            <person name="Inagaki M."/>
        </authorList>
    </citation>
    <scope>PROTEIN SEQUENCE OF 9-18; 24-75 AND 415-452</scope>
    <scope>PHOSPHORYLATION AT SER-9; SER-13; SER-24; SER-34; SER-37; SER-43; SER-51; SER-417; SER-424 AND SER-426</scope>
    <source>
        <tissue>Liver</tissue>
    </source>
</reference>
<reference key="6">
    <citation type="journal article" date="2005" name="FEBS J.">
        <title>Proteome analysis of a rat liver nuclear insoluble protein fraction and localization of a novel protein, ISP36, to compartments in the interchromatin space.</title>
        <authorList>
            <person name="Segawa M."/>
            <person name="Niino K."/>
            <person name="Mineki R."/>
            <person name="Kaga N."/>
            <person name="Murayama K."/>
            <person name="Sugimoto K."/>
            <person name="Watanabe Y."/>
            <person name="Furukawa K."/>
            <person name="Horigome T."/>
        </authorList>
    </citation>
    <scope>PROTEIN SEQUENCE OF 265-273</scope>
    <scope>SUBCELLULAR LOCATION</scope>
    <source>
        <tissue>Liver</tissue>
    </source>
</reference>
<reference key="7">
    <citation type="journal article" date="2006" name="J. Proteome Res.">
        <title>Phosphoproteomic analysis of rat liver by high capacity IMAC and LC-MS/MS.</title>
        <authorList>
            <person name="Moser K."/>
            <person name="White F.M."/>
        </authorList>
    </citation>
    <scope>IDENTIFICATION BY MASS SPECTROMETRY [LARGE SCALE ANALYSIS]</scope>
</reference>
<reference key="8">
    <citation type="journal article" date="2012" name="Nat. Commun.">
        <title>Quantitative maps of protein phosphorylation sites across 14 different rat organs and tissues.</title>
        <authorList>
            <person name="Lundby A."/>
            <person name="Secher A."/>
            <person name="Lage K."/>
            <person name="Nordsborg N.B."/>
            <person name="Dmytriyev A."/>
            <person name="Lundby C."/>
            <person name="Olsen J.V."/>
        </authorList>
    </citation>
    <scope>PHOSPHORYLATION [LARGE SCALE ANALYSIS] AT SER-21; SER-24; THR-26; SER-27; SER-43; SER-44; SER-47; SER-51; SER-253; SER-258; SER-432; SER-475; SER-478 AND SER-482</scope>
    <scope>IDENTIFICATION BY MASS SPECTROMETRY [LARGE SCALE ANALYSIS]</scope>
</reference>
<proteinExistence type="evidence at protein level"/>
<name>K2C8_RAT</name>
<comment type="function">
    <text evidence="7">Together with KRT19, helps to link the contractile apparatus to dystrophin at the costameres of striated muscle.</text>
</comment>
<comment type="subunit">
    <text evidence="2 3 7">Heterotetramer of two type I and two type II keratins (By similarity). Forms a heterodimer with KRT18 (By similarity). Associates with KRT20 (By similarity). Interacts with PNN (By similarity). When associated with KRT19, interacts with DMD (PubMed:15247274). Interacts with TCHP (By similarity). Interacts with APEX1 (By similarity). Interacts with GPER1 (By similarity). Interacts with EPPK1 (By similarity). Interacts with PKP1 and PKP2 (By similarity).</text>
</comment>
<comment type="subcellular location">
    <subcellularLocation>
        <location evidence="8">Cytoplasm</location>
    </subcellularLocation>
    <subcellularLocation>
        <location evidence="8">Nucleus</location>
        <location evidence="8">Nucleoplasm</location>
    </subcellularLocation>
    <subcellularLocation>
        <location evidence="8">Nucleus matrix</location>
    </subcellularLocation>
</comment>
<comment type="tissue specificity">
    <text evidence="6 7">Expressed in cardiac and striated muscle. Expressed at Z-lines within the muscle fibers and at Z-line and M-line domains at costameres at the sarcolemmal membrane (at protein level). Observed in coagulating gland, bladder, salivary gland, kidney, spleen, thymus, lung and heart. Also observed in ventral prostate, seminal vesicle and liver where expression increases following castration.</text>
</comment>
<comment type="PTM">
    <text evidence="1">O-glycosylated. O-GlcNAcylation at multiple sites increases solubility, and decreases stability by inducing proteasomal degradation (By similarity).</text>
</comment>
<comment type="PTM">
    <text evidence="1">O-glycosylated (O-GlcNAcylated), in a cell cycle-dependent manner.</text>
</comment>
<comment type="miscellaneous">
    <text>There are two types of cytoskeletal and microfibrillar keratin: I (acidic; 40-55 kDa) and II (neutral to basic; 56-70 kDa).</text>
</comment>
<comment type="similarity">
    <text evidence="4">Belongs to the intermediate filament family.</text>
</comment>
<comment type="sequence caution" evidence="10">
    <conflict type="erroneous initiation">
        <sequence resource="EMBL-CDS" id="AAA19668"/>
    </conflict>
    <text>Truncated N-terminus.</text>
</comment>
<sequence length="483" mass="54019">MSVRVTQKSYKMSTSGPRAFSSRSFTSGPGARISSSSFSRVGSSSSSFRGSLGGFGGAGVGGITAVTVNQSLLNPLKLEVDPNIQAVRTQEKEQIKTLNNKFASFIDKVRFLEQQNKMLETKWSLLQQQKTSRSNMDNMFESYINNLRRQLEALGQEKLKLEVELGNMQGLVEDFKNKYEDEINKRTEMENEFVLIKKDVDEAYMNKVELESRLEGLTDEINFLRQIHEEEIRELQSQISDTSVVLSMDNSRSLDMDSIIAEVRAQYEEIANRSRAEAETMYQIKYEELQTLAGKHGDDLRRSKTEISEMNRNISRLQAEIDALKGQRATLEAAIADAEQRGELAVKDANAKLEDLKNALQKAKQDMARQLREYQELMNVKLALDIEIATYRKLLEGEESRLESGMQNMSIHTKTTSGYAGGLSSSYGGLTSPGFSYGMSSFQPGFGSVGGSSTYSRTKAVVVKKIETRDGKLVSESSDIMSK</sequence>
<accession>Q10758</accession>
<accession>Q5WPB3</accession>
<organism>
    <name type="scientific">Rattus norvegicus</name>
    <name type="common">Rat</name>
    <dbReference type="NCBI Taxonomy" id="10116"/>
    <lineage>
        <taxon>Eukaryota</taxon>
        <taxon>Metazoa</taxon>
        <taxon>Chordata</taxon>
        <taxon>Craniata</taxon>
        <taxon>Vertebrata</taxon>
        <taxon>Euteleostomi</taxon>
        <taxon>Mammalia</taxon>
        <taxon>Eutheria</taxon>
        <taxon>Euarchontoglires</taxon>
        <taxon>Glires</taxon>
        <taxon>Rodentia</taxon>
        <taxon>Myomorpha</taxon>
        <taxon>Muroidea</taxon>
        <taxon>Muridae</taxon>
        <taxon>Murinae</taxon>
        <taxon>Rattus</taxon>
    </lineage>
</organism>